<sequence>MGSIYRSEHMKLCQIFFQSESAYQCVAELGELGMAQFIDLNEEQNAYTRKFVNEVRRCDEMERKINFVEDEITKDLVPIPDYDEHIPAPQPKHMGEMEANLEKLEEELVQINKNCKVLKNNHVQLLEMKAVLEHVTSLLDPHSKREAAMSISEAARGEAGPISFGMKDEFDKPVKDEKELKFVTGVVKRSKAIAFERFLWRLSRAKVFAKFIQIQEQTELFSNEFEDKCVFILFFSGEQLRAKVKKICDGFQAKCYTVPENPAERTKLLLNIKVQTTDMKAVIEKTLDYRSKCIHAAATNLRKWGIMLLKLKSIFHTLNMFSVDVTQKCLIAECWVPEADIGQVKNSLHMGTIHSGSTVPAILNEMETDKYPPTYFKLNKFTQGFQNIVDAYGIANYREVNPAPWTIISFPFLFAVMFGDAGHGIIMLIAASAFVIFEKKLISMKIKDEIFNTFFGGRYVVLLMGMFAIYTGFIYNDFYSKSVNIFGSSWVNPYNQTLLANMDAQGADSNTDLSLTFPPEIAFNHDYGPYPFGVDPVWNLAINRLNFLNPMKMKTSILLGISQMAFGIMLSLMNHIGNRSVVDIVFVFIPQCLFLGCIFVYLCLQVLMKWIFFYVKPAYIFGRLYPGSNCAPSLLIGLINMFMVKSRDASFAHDVGTAAGKEWVIVNGQNVTYTINDQCYLQQWYPNQSLVELILLLIAVVSVPVMLLVKPFYIRWRHSRGLHIDLGHGPDEHGEFNFGDIMVHQAIHTIEFVLGCVSHTASYLRLWALSLAHAQLSDVLWTMVLRMSLTMGGWGGSAAITILFYFIFSILSVCILILMEGLSAFLHAIRLHWVEFQSKFYGGTGIQFEPFCFTKIIRVYEGLDQ</sequence>
<name>VPP3_CAEEL</name>
<accession>G5EGP4</accession>
<reference evidence="9" key="1">
    <citation type="journal article" date="2001" name="J. Biol. Chem.">
        <title>Four subunit a isoforms of Caenorhabditis elegans vacuolar H+-ATPase. Cell-specific expression during development.</title>
        <authorList>
            <person name="Oka T."/>
            <person name="Toyomura T."/>
            <person name="Honjo K."/>
            <person name="Wada Y."/>
            <person name="Futai M."/>
        </authorList>
    </citation>
    <scope>NUCLEOTIDE SEQUENCE [MRNA]</scope>
    <scope>INTERACTION WITH VHA-11</scope>
    <scope>SUBCELLULAR LOCATION</scope>
    <scope>DEVELOPMENTAL STAGE</scope>
    <scope>DISRUPTION PHENOTYPE</scope>
</reference>
<reference evidence="10" key="2">
    <citation type="journal article" date="1998" name="Science">
        <title>Genome sequence of the nematode C. elegans: a platform for investigating biology.</title>
        <authorList>
            <consortium name="The C. elegans sequencing consortium"/>
        </authorList>
    </citation>
    <scope>NUCLEOTIDE SEQUENCE [LARGE SCALE GENOMIC DNA]</scope>
    <source>
        <strain evidence="10">Bristol N2</strain>
    </source>
</reference>
<reference evidence="8" key="3">
    <citation type="journal article" date="2009" name="Am. J. Physiol.">
        <title>Loss of the apical V-ATPase a-subunit VHA-6 prevents acidification of the intestinal lumen during a rhythmic behavior in C. elegans.</title>
        <authorList>
            <person name="Allman E."/>
            <person name="Johnson D."/>
            <person name="Nehrke K."/>
        </authorList>
    </citation>
    <scope>FUNCTION</scope>
    <scope>SUBCELLULAR LOCATION</scope>
    <scope>DEVELOPMENTAL STAGE</scope>
</reference>
<evidence type="ECO:0000250" key="1">
    <source>
        <dbReference type="UniProtKB" id="Q29466"/>
    </source>
</evidence>
<evidence type="ECO:0000255" key="2"/>
<evidence type="ECO:0000255" key="3">
    <source>
        <dbReference type="PROSITE-ProRule" id="PRU00498"/>
    </source>
</evidence>
<evidence type="ECO:0000255" key="4">
    <source>
        <dbReference type="RuleBase" id="RU361189"/>
    </source>
</evidence>
<evidence type="ECO:0000269" key="5">
    <source>
    </source>
</evidence>
<evidence type="ECO:0000269" key="6">
    <source>
    </source>
</evidence>
<evidence type="ECO:0000303" key="7">
    <source>
    </source>
</evidence>
<evidence type="ECO:0000305" key="8"/>
<evidence type="ECO:0000312" key="9">
    <source>
        <dbReference type="EMBL" id="BAB62292.1"/>
    </source>
</evidence>
<evidence type="ECO:0000312" key="10">
    <source>
        <dbReference type="Proteomes" id="UP000001940"/>
    </source>
</evidence>
<evidence type="ECO:0000312" key="11">
    <source>
        <dbReference type="WormBase" id="VW02B12L.1"/>
    </source>
</evidence>
<organism evidence="10">
    <name type="scientific">Caenorhabditis elegans</name>
    <dbReference type="NCBI Taxonomy" id="6239"/>
    <lineage>
        <taxon>Eukaryota</taxon>
        <taxon>Metazoa</taxon>
        <taxon>Ecdysozoa</taxon>
        <taxon>Nematoda</taxon>
        <taxon>Chromadorea</taxon>
        <taxon>Rhabditida</taxon>
        <taxon>Rhabditina</taxon>
        <taxon>Rhabditomorpha</taxon>
        <taxon>Rhabditoidea</taxon>
        <taxon>Rhabditidae</taxon>
        <taxon>Peloderinae</taxon>
        <taxon>Caenorhabditis</taxon>
    </lineage>
</organism>
<protein>
    <recommendedName>
        <fullName evidence="8">V-type proton ATPase 116 kDa subunit a 3</fullName>
        <shortName evidence="8">V-ATPase 116 kDa isoform a 3</shortName>
    </recommendedName>
</protein>
<feature type="chain" id="PRO_0000454082" description="V-type proton ATPase 116 kDa subunit a 3">
    <location>
        <begin position="1"/>
        <end position="865"/>
    </location>
</feature>
<feature type="topological domain" description="Cytoplasmic" evidence="8">
    <location>
        <begin position="1"/>
        <end position="409"/>
    </location>
</feature>
<feature type="transmembrane region" description="Helical" evidence="2">
    <location>
        <begin position="410"/>
        <end position="430"/>
    </location>
</feature>
<feature type="topological domain" description="Extracellular" evidence="8">
    <location>
        <begin position="431"/>
        <end position="453"/>
    </location>
</feature>
<feature type="transmembrane region" description="Helical" evidence="2">
    <location>
        <begin position="454"/>
        <end position="474"/>
    </location>
</feature>
<feature type="topological domain" description="Cytoplasmic" evidence="8">
    <location>
        <begin position="475"/>
        <end position="556"/>
    </location>
</feature>
<feature type="transmembrane region" description="Helical" evidence="2">
    <location>
        <begin position="557"/>
        <end position="577"/>
    </location>
</feature>
<feature type="topological domain" description="Extracellular" evidence="8">
    <location>
        <begin position="578"/>
        <end position="583"/>
    </location>
</feature>
<feature type="transmembrane region" description="Helical" evidence="2">
    <location>
        <begin position="584"/>
        <end position="604"/>
    </location>
</feature>
<feature type="topological domain" description="Cytoplasmic" evidence="8">
    <location>
        <begin position="605"/>
        <end position="623"/>
    </location>
</feature>
<feature type="transmembrane region" description="Helical" evidence="2">
    <location>
        <begin position="624"/>
        <end position="644"/>
    </location>
</feature>
<feature type="topological domain" description="Extracellular" evidence="8">
    <location>
        <begin position="645"/>
        <end position="688"/>
    </location>
</feature>
<feature type="transmembrane region" description="Helical" evidence="2">
    <location>
        <begin position="689"/>
        <end position="709"/>
    </location>
</feature>
<feature type="topological domain" description="Cytoplasmic" evidence="8">
    <location>
        <begin position="710"/>
        <end position="798"/>
    </location>
</feature>
<feature type="transmembrane region" description="Helical" evidence="2">
    <location>
        <begin position="799"/>
        <end position="819"/>
    </location>
</feature>
<feature type="topological domain" description="Extracellular" evidence="8">
    <location>
        <begin position="820"/>
        <end position="865"/>
    </location>
</feature>
<feature type="coiled-coil region" evidence="2">
    <location>
        <begin position="51"/>
        <end position="121"/>
    </location>
</feature>
<feature type="glycosylation site" description="N-linked (GlcNAc...) asparagine" evidence="3">
    <location>
        <position position="578"/>
    </location>
</feature>
<feature type="glycosylation site" description="N-linked (GlcNAc...) asparagine" evidence="3">
    <location>
        <position position="670"/>
    </location>
</feature>
<feature type="glycosylation site" description="N-linked (GlcNAc...) asparagine" evidence="3">
    <location>
        <position position="687"/>
    </location>
</feature>
<gene>
    <name evidence="7 11" type="primary">vha-6</name>
    <name evidence="11" type="ORF">VW02B12L.1</name>
</gene>
<proteinExistence type="evidence at protein level"/>
<keyword id="KW-1003">Cell membrane</keyword>
<keyword id="KW-0175">Coiled coil</keyword>
<keyword id="KW-0325">Glycoprotein</keyword>
<keyword id="KW-0375">Hydrogen ion transport</keyword>
<keyword id="KW-0406">Ion transport</keyword>
<keyword id="KW-0472">Membrane</keyword>
<keyword id="KW-1185">Reference proteome</keyword>
<keyword id="KW-0812">Transmembrane</keyword>
<keyword id="KW-1133">Transmembrane helix</keyword>
<keyword id="KW-0813">Transport</keyword>
<dbReference type="EMBL" id="AB055111">
    <property type="protein sequence ID" value="BAB62292.1"/>
    <property type="molecule type" value="mRNA"/>
</dbReference>
<dbReference type="EMBL" id="BX284602">
    <property type="protein sequence ID" value="CAA20334.1"/>
    <property type="molecule type" value="Genomic_DNA"/>
</dbReference>
<dbReference type="PIR" id="T18565">
    <property type="entry name" value="T18565"/>
</dbReference>
<dbReference type="RefSeq" id="NP_496436.1">
    <property type="nucleotide sequence ID" value="NM_064035.9"/>
</dbReference>
<dbReference type="SMR" id="G5EGP4"/>
<dbReference type="FunCoup" id="G5EGP4">
    <property type="interactions" value="470"/>
</dbReference>
<dbReference type="STRING" id="6239.VW02B12L.1.1"/>
<dbReference type="TCDB" id="3.A.2.2.7">
    <property type="family name" value="the h+- or na+-translocating f-type, v-type and a-type atpase (f-atpase) superfamily"/>
</dbReference>
<dbReference type="GlyCosmos" id="G5EGP4">
    <property type="glycosylation" value="3 sites, No reported glycans"/>
</dbReference>
<dbReference type="PaxDb" id="6239-VW02B12L.1.1"/>
<dbReference type="PeptideAtlas" id="G5EGP4"/>
<dbReference type="EnsemblMetazoa" id="VW02B12L.1.1">
    <property type="protein sequence ID" value="VW02B12L.1.1"/>
    <property type="gene ID" value="WBGene00006915"/>
</dbReference>
<dbReference type="GeneID" id="174743"/>
<dbReference type="KEGG" id="cel:CELE_VW02B12L.1"/>
<dbReference type="AGR" id="WB:WBGene00006915"/>
<dbReference type="CTD" id="174743"/>
<dbReference type="WormBase" id="VW02B12L.1">
    <property type="protein sequence ID" value="CE18980"/>
    <property type="gene ID" value="WBGene00006915"/>
    <property type="gene designation" value="vha-6"/>
</dbReference>
<dbReference type="eggNOG" id="KOG2189">
    <property type="taxonomic scope" value="Eukaryota"/>
</dbReference>
<dbReference type="GeneTree" id="ENSGT00950000182881"/>
<dbReference type="HOGENOM" id="CLU_005230_0_2_1"/>
<dbReference type="InParanoid" id="G5EGP4"/>
<dbReference type="OMA" id="HYVIHTI"/>
<dbReference type="OrthoDB" id="10264220at2759"/>
<dbReference type="PhylomeDB" id="G5EGP4"/>
<dbReference type="Reactome" id="R-CEL-1222556">
    <property type="pathway name" value="ROS and RNS production in phagocytes"/>
</dbReference>
<dbReference type="Reactome" id="R-CEL-6798695">
    <property type="pathway name" value="Neutrophil degranulation"/>
</dbReference>
<dbReference type="Reactome" id="R-CEL-77387">
    <property type="pathway name" value="Insulin receptor recycling"/>
</dbReference>
<dbReference type="Reactome" id="R-CEL-917977">
    <property type="pathway name" value="Transferrin endocytosis and recycling"/>
</dbReference>
<dbReference type="Reactome" id="R-CEL-9639288">
    <property type="pathway name" value="Amino acids regulate mTORC1"/>
</dbReference>
<dbReference type="Reactome" id="R-CEL-983712">
    <property type="pathway name" value="Ion channel transport"/>
</dbReference>
<dbReference type="PRO" id="PR:G5EGP4"/>
<dbReference type="Proteomes" id="UP000001940">
    <property type="component" value="Chromosome II"/>
</dbReference>
<dbReference type="Bgee" id="WBGene00006915">
    <property type="expression patterns" value="Expressed in larva and 4 other cell types or tissues"/>
</dbReference>
<dbReference type="GO" id="GO:0045177">
    <property type="term" value="C:apical part of cell"/>
    <property type="evidence" value="ECO:0000314"/>
    <property type="project" value="WormBase"/>
</dbReference>
<dbReference type="GO" id="GO:0016324">
    <property type="term" value="C:apical plasma membrane"/>
    <property type="evidence" value="ECO:0000314"/>
    <property type="project" value="WormBase"/>
</dbReference>
<dbReference type="GO" id="GO:0005886">
    <property type="term" value="C:plasma membrane"/>
    <property type="evidence" value="ECO:0000318"/>
    <property type="project" value="GO_Central"/>
</dbReference>
<dbReference type="GO" id="GO:0016471">
    <property type="term" value="C:vacuolar proton-transporting V-type ATPase complex"/>
    <property type="evidence" value="ECO:0000353"/>
    <property type="project" value="WormBase"/>
</dbReference>
<dbReference type="GO" id="GO:0000220">
    <property type="term" value="C:vacuolar proton-transporting V-type ATPase, V0 domain"/>
    <property type="evidence" value="ECO:0007669"/>
    <property type="project" value="InterPro"/>
</dbReference>
<dbReference type="GO" id="GO:0051117">
    <property type="term" value="F:ATPase binding"/>
    <property type="evidence" value="ECO:0000318"/>
    <property type="project" value="GO_Central"/>
</dbReference>
<dbReference type="GO" id="GO:0046961">
    <property type="term" value="F:proton-transporting ATPase activity, rotational mechanism"/>
    <property type="evidence" value="ECO:0007669"/>
    <property type="project" value="InterPro"/>
</dbReference>
<dbReference type="GO" id="GO:0002119">
    <property type="term" value="P:nematode larval development"/>
    <property type="evidence" value="ECO:0000315"/>
    <property type="project" value="WormBase"/>
</dbReference>
<dbReference type="GO" id="GO:0007035">
    <property type="term" value="P:vacuolar acidification"/>
    <property type="evidence" value="ECO:0000318"/>
    <property type="project" value="GO_Central"/>
</dbReference>
<dbReference type="InterPro" id="IPR002490">
    <property type="entry name" value="V-ATPase_116kDa_su"/>
</dbReference>
<dbReference type="InterPro" id="IPR026028">
    <property type="entry name" value="V-type_ATPase_116kDa_su_euka"/>
</dbReference>
<dbReference type="PANTHER" id="PTHR11629:SF58">
    <property type="entry name" value="V-TYPE PROTON ATPASE 116 KDA SUBUNIT A 3"/>
    <property type="match status" value="1"/>
</dbReference>
<dbReference type="PANTHER" id="PTHR11629">
    <property type="entry name" value="VACUOLAR PROTON ATPASES"/>
    <property type="match status" value="1"/>
</dbReference>
<dbReference type="Pfam" id="PF01496">
    <property type="entry name" value="V_ATPase_I"/>
    <property type="match status" value="2"/>
</dbReference>
<dbReference type="PIRSF" id="PIRSF001293">
    <property type="entry name" value="ATP6V0A1"/>
    <property type="match status" value="1"/>
</dbReference>
<comment type="function">
    <text evidence="1 6">Subunit of the V0 complex of vacuolar(H+)-ATPase (V-ATPase), a multisubunit enzyme composed of a peripheral complex (V1) that hydrolyzes ATP and a membrane integral complex (V0) that translocates protons (By similarity). V-ATPase is responsible for acidifying and maintaining the pH of intracellular compartments and in some cell types, is targeted to the plasma membrane, where it is responsible for acidifying the extracellular environment (PubMed:19741196). In the intestine, required for the rhythmic defecation behavior by promoting acidification in the gut lumen following defecation (PubMed:19741196). Also, luminal acidification is required for nutrient uptake (PubMed:19741196).</text>
</comment>
<comment type="subunit">
    <text evidence="1 5">V-ATPase is a heteromultimeric enzyme made up of two complexes: the ATP-hydrolytic V1 complex and the proton translocation V0 complex (By similarity). The V1 complex consists of three catalytic AB heterodimers that form a heterohexamer, three peripheral stalks each consisting of EG heterodimers, one central rotor including subunits D and F, and the regulatory subunits C and H (By similarity). The proton translocation complex V0 consists of the proton transport subunit a, a ring of proteolipid subunits c9c'', rotary subunit d, subunits e and f, and the accessory subunits vah-19/Ac45 and vah-20/PRR (By similarity). Interacts with V-type proton ATPase subunit C vha-11 (PubMed:11441002).</text>
</comment>
<comment type="subcellular location">
    <subcellularLocation>
        <location evidence="5 6">Apical cell membrane</location>
        <topology evidence="2">Multi-pass membrane protein</topology>
    </subcellularLocation>
    <text evidence="5">Localizes to the apical surface of intestinal cells (PubMed:11441002). Localizes to dot-like structures, possibly P granules, in P2 cells of 4-cell stage embryos (PubMed:11441002).</text>
</comment>
<comment type="developmental stage">
    <text evidence="5 6">Expressed in P2 cell of 4-cell stage embryo (at protein level) (PubMed:11441002). At the comma stage, expressed in cells in the lateral sides (at protein level) (PubMed:11441002). Specifically expressed in intestine from the 2-fold embryonic stage onwards including in the larval and adult stages (at protein level) (PubMed:11441002, PubMed:19741196).</text>
</comment>
<comment type="disruption phenotype">
    <text evidence="5 6">RNAi-mediated knockdown causes larval lethality at the L1 stage (PubMed:11441002). RNAi-mediated knockdown at the L1 larval stage causes reduced growth rate (PubMed:19741196). The progeny of the few that reach adulthood is arrested at the L1 larval stage (PubMed:19741196). Rhythmic defecation behavior is altered; the defecation cycle period is extended and animals have a slight arrhythmia (PubMed:19741196). In the intestinal epithelium, pH oscillates once per cycle as in the wild-type, but the oscillations are diminished in amplitude and cells are relatively acidic (PubMed:19741196). Also, luminal pH oscillations are reduced (PubMed:19741196). RNAi-mediated knockdown at the L2 larval stage causes a reduction of whole body fat mass in young adults (PubMed:19741196). In some animals, the lumen appears swollen, with a reduction of the cytoplasmic contents of intestinal cells (PubMed:19741196). Defect in nutrient absorption (PubMed:19741196).</text>
</comment>
<comment type="similarity">
    <text evidence="4">Belongs to the V-ATPase 116 kDa subunit family.</text>
</comment>